<evidence type="ECO:0000255" key="1">
    <source>
        <dbReference type="PROSITE-ProRule" id="PRU00434"/>
    </source>
</evidence>
<evidence type="ECO:0000269" key="2">
    <source>
    </source>
</evidence>
<evidence type="ECO:0000269" key="3">
    <source>
    </source>
</evidence>
<evidence type="ECO:0000303" key="4">
    <source>
    </source>
</evidence>
<evidence type="ECO:0000305" key="5"/>
<evidence type="ECO:0000305" key="6">
    <source>
    </source>
</evidence>
<evidence type="ECO:0000305" key="7">
    <source>
    </source>
</evidence>
<sequence>MSVFLAVDHVHQVFDLPGGGQYIALKDVSLNIRPGEFISLIGHSGCGKSTLLNLIAGLAQPSSGGIILEGRQVTEPGPDRMVVFQNYSLLPWRTVRQNIALAVDSVLHDRNRTERRTIIEETIDLVGLRAAADKYPHEISGGMKQRVAIARGLAIRPKLLLLDEPFGALDALTRGNLQEQLMRICQEAGVTAVMVTHDVDEALLLSDRVVMLTNGPAAQIGQILEVDFPRPRQRLEMMETPHYYDLRNELINFLQQQRRAKRRAKAAAPAPAVAASQQKTVRLGFLPGNDCAPLAIAQELGLFQDLGLSVELQSFLTWEALEDSIRLGQLEGALMMAAQPLAMTMGLGGHRPFAIATPLTVSRNGGAIALSRRYLNAGVRSLEDLCQFLAATPQRLRLAIPDPIAMPALLLRYWLASAGLNPEQDVELVGMSPYEMVEALKAGDIDGFAAGEMRIALAVQAGAAYVLATDLDIWAGHPEKVLGLPEAWLQVNPETAIALCSALLKAGELCDDPRQRDRIVEVLQQPQYLGSAAGTVLQRYFDFGLGDEPTQILRFNQFHVDQANYPNPLEGTWLLTQLCRWGLTPLPKNRQELLDRVYRRDIYEAAIAAVGFPLITPSQRGFELFDAVPFDPDSPLRYLEQFEIKAPIQVAPIPLATSA</sequence>
<dbReference type="EC" id="7.3.2.4" evidence="6"/>
<dbReference type="EMBL" id="X61625">
    <property type="protein sequence ID" value="CAA43811.1"/>
    <property type="molecule type" value="Genomic_DNA"/>
</dbReference>
<dbReference type="EMBL" id="CP000100">
    <property type="protein sequence ID" value="ABB57267.1"/>
    <property type="molecule type" value="Genomic_DNA"/>
</dbReference>
<dbReference type="PIR" id="S30893">
    <property type="entry name" value="S30893"/>
</dbReference>
<dbReference type="RefSeq" id="WP_011242627.1">
    <property type="nucleotide sequence ID" value="NZ_JACJTX010000003.1"/>
</dbReference>
<dbReference type="SMR" id="P38045"/>
<dbReference type="STRING" id="1140.Synpcc7942_1237"/>
<dbReference type="TCDB" id="3.A.1.16.1">
    <property type="family name" value="the atp-binding cassette (abc) superfamily"/>
</dbReference>
<dbReference type="PaxDb" id="1140-Synpcc7942_1237"/>
<dbReference type="KEGG" id="syf:Synpcc7942_1237"/>
<dbReference type="eggNOG" id="COG0715">
    <property type="taxonomic scope" value="Bacteria"/>
</dbReference>
<dbReference type="eggNOG" id="COG1116">
    <property type="taxonomic scope" value="Bacteria"/>
</dbReference>
<dbReference type="HOGENOM" id="CLU_025127_1_1_3"/>
<dbReference type="OrthoDB" id="450403at2"/>
<dbReference type="BioCyc" id="SYNEL:SYNPCC7942_1237-MONOMER"/>
<dbReference type="Proteomes" id="UP000889800">
    <property type="component" value="Chromosome"/>
</dbReference>
<dbReference type="GO" id="GO:0005886">
    <property type="term" value="C:plasma membrane"/>
    <property type="evidence" value="ECO:0007669"/>
    <property type="project" value="UniProtKB-SubCell"/>
</dbReference>
<dbReference type="GO" id="GO:0015414">
    <property type="term" value="F:ABC-type nitrate transporter activity"/>
    <property type="evidence" value="ECO:0007669"/>
    <property type="project" value="UniProtKB-EC"/>
</dbReference>
<dbReference type="GO" id="GO:0005524">
    <property type="term" value="F:ATP binding"/>
    <property type="evidence" value="ECO:0007669"/>
    <property type="project" value="UniProtKB-KW"/>
</dbReference>
<dbReference type="GO" id="GO:0016887">
    <property type="term" value="F:ATP hydrolysis activity"/>
    <property type="evidence" value="ECO:0007669"/>
    <property type="project" value="InterPro"/>
</dbReference>
<dbReference type="GO" id="GO:0042128">
    <property type="term" value="P:nitrate assimilation"/>
    <property type="evidence" value="ECO:0007669"/>
    <property type="project" value="UniProtKB-KW"/>
</dbReference>
<dbReference type="CDD" id="cd03293">
    <property type="entry name" value="ABC_NrtD_SsuB_transporters"/>
    <property type="match status" value="1"/>
</dbReference>
<dbReference type="CDD" id="cd13553">
    <property type="entry name" value="PBP2_NrtA_CpmA_like"/>
    <property type="match status" value="1"/>
</dbReference>
<dbReference type="Gene3D" id="3.40.50.300">
    <property type="entry name" value="P-loop containing nucleotide triphosphate hydrolases"/>
    <property type="match status" value="1"/>
</dbReference>
<dbReference type="Gene3D" id="3.40.190.10">
    <property type="entry name" value="Periplasmic binding protein-like II"/>
    <property type="match status" value="2"/>
</dbReference>
<dbReference type="InterPro" id="IPR003593">
    <property type="entry name" value="AAA+_ATPase"/>
</dbReference>
<dbReference type="InterPro" id="IPR003439">
    <property type="entry name" value="ABC_transporter-like_ATP-bd"/>
</dbReference>
<dbReference type="InterPro" id="IPR017871">
    <property type="entry name" value="ABC_transporter-like_CS"/>
</dbReference>
<dbReference type="InterPro" id="IPR050166">
    <property type="entry name" value="ABC_transporter_ATP-bind"/>
</dbReference>
<dbReference type="InterPro" id="IPR005890">
    <property type="entry name" value="NO3_transporter_ATP-bd-like"/>
</dbReference>
<dbReference type="InterPro" id="IPR044527">
    <property type="entry name" value="NrtA/CpmA_ABC-bd_dom"/>
</dbReference>
<dbReference type="InterPro" id="IPR027417">
    <property type="entry name" value="P-loop_NTPase"/>
</dbReference>
<dbReference type="NCBIfam" id="TIGR01184">
    <property type="entry name" value="ntrCD"/>
    <property type="match status" value="1"/>
</dbReference>
<dbReference type="PANTHER" id="PTHR42788:SF7">
    <property type="entry name" value="NITRATE ABC TRANSPORTER ATP-BINDING PROTEIN"/>
    <property type="match status" value="1"/>
</dbReference>
<dbReference type="PANTHER" id="PTHR42788">
    <property type="entry name" value="TAURINE IMPORT ATP-BINDING PROTEIN-RELATED"/>
    <property type="match status" value="1"/>
</dbReference>
<dbReference type="Pfam" id="PF00005">
    <property type="entry name" value="ABC_tran"/>
    <property type="match status" value="1"/>
</dbReference>
<dbReference type="Pfam" id="PF13379">
    <property type="entry name" value="NMT1_2"/>
    <property type="match status" value="1"/>
</dbReference>
<dbReference type="SMART" id="SM00382">
    <property type="entry name" value="AAA"/>
    <property type="match status" value="1"/>
</dbReference>
<dbReference type="SUPFAM" id="SSF52540">
    <property type="entry name" value="P-loop containing nucleoside triphosphate hydrolases"/>
    <property type="match status" value="1"/>
</dbReference>
<dbReference type="SUPFAM" id="SSF53850">
    <property type="entry name" value="Periplasmic binding protein-like II"/>
    <property type="match status" value="1"/>
</dbReference>
<dbReference type="PROSITE" id="PS00211">
    <property type="entry name" value="ABC_TRANSPORTER_1"/>
    <property type="match status" value="1"/>
</dbReference>
<dbReference type="PROSITE" id="PS50893">
    <property type="entry name" value="ABC_TRANSPORTER_2"/>
    <property type="match status" value="1"/>
</dbReference>
<feature type="chain" id="PRO_0000092646" description="Nitrate import ATP-binding protein NrtC">
    <location>
        <begin position="1"/>
        <end position="659"/>
    </location>
</feature>
<feature type="domain" description="ABC transporter" evidence="1">
    <location>
        <begin position="5"/>
        <end position="239"/>
    </location>
</feature>
<feature type="region of interest" description="Linker" evidence="7">
    <location>
        <begin position="255"/>
        <end position="278"/>
    </location>
</feature>
<feature type="region of interest" description="NrtA-like" evidence="7">
    <location>
        <begin position="279"/>
        <end position="659"/>
    </location>
</feature>
<feature type="binding site" evidence="1">
    <location>
        <begin position="42"/>
        <end position="49"/>
    </location>
    <ligand>
        <name>ATP</name>
        <dbReference type="ChEBI" id="CHEBI:30616"/>
    </ligand>
</feature>
<proteinExistence type="evidence at protein level"/>
<comment type="function">
    <text evidence="2 6">Part of the ABC transporter complex NrtABCD involved in nitrate uptake (PubMed:7767600, PubMed:8437564). The complex is probably also involved in nitrite transport (PubMed:7767600). Probably responsible for energy coupling to the transport system (PubMed:7767600).</text>
</comment>
<comment type="catalytic activity">
    <reaction evidence="6">
        <text>nitrate(out) + ATP + H2O = nitrate(in) + ADP + phosphate + H(+)</text>
        <dbReference type="Rhea" id="RHEA:13181"/>
        <dbReference type="ChEBI" id="CHEBI:15377"/>
        <dbReference type="ChEBI" id="CHEBI:15378"/>
        <dbReference type="ChEBI" id="CHEBI:17632"/>
        <dbReference type="ChEBI" id="CHEBI:30616"/>
        <dbReference type="ChEBI" id="CHEBI:43474"/>
        <dbReference type="ChEBI" id="CHEBI:456216"/>
        <dbReference type="EC" id="7.3.2.4"/>
    </reaction>
</comment>
<comment type="activity regulation">
    <text evidence="3">Transport is inhibited by ammonium. The C-terminal domain of NrtC is involved in the ammonium-promoted inhibition of the nitrate/nitrite transporter.</text>
</comment>
<comment type="subunit">
    <text evidence="6">The complex is composed of two ATP-binding proteins (NrtC and NrtD), two transmembrane proteins (NrtB) and a solute-binding protein (NrtA).</text>
</comment>
<comment type="subcellular location">
    <subcellularLocation>
        <location evidence="6">Cell inner membrane</location>
        <topology evidence="6">Peripheral membrane protein</topology>
        <orientation evidence="6">Cytoplasmic side</orientation>
    </subcellularLocation>
</comment>
<comment type="domain">
    <text evidence="2 3">Contains an ATP-binding N-terminal domain and a NrtA-like C-terminal domain, which are connected by a segment containing an abundance of glutamine, alanine and positively charged amino acids (PubMed:8437564). The N-terminal domain is required for activity and the C-terminal domain is involved in regulation of the activity (PubMed:9341163).</text>
</comment>
<comment type="disruption phenotype">
    <text evidence="2">Mutant is unable to grow on nitrate, but grows normally with nitrite or ammonium as the nitrogen source.</text>
</comment>
<comment type="similarity">
    <text evidence="5">Belongs to the ABC transporter superfamily. Nitrate/nitrite/cyanate uptake transporter (NitT) (TC 3.A.1.16) family.</text>
</comment>
<protein>
    <recommendedName>
        <fullName evidence="5">Nitrate import ATP-binding protein NrtC</fullName>
        <ecNumber evidence="6">7.3.2.4</ecNumber>
    </recommendedName>
</protein>
<organism>
    <name type="scientific">Synechococcus elongatus (strain ATCC 33912 / PCC 7942 / FACHB-805)</name>
    <name type="common">Anacystis nidulans R2</name>
    <dbReference type="NCBI Taxonomy" id="1140"/>
    <lineage>
        <taxon>Bacteria</taxon>
        <taxon>Bacillati</taxon>
        <taxon>Cyanobacteriota</taxon>
        <taxon>Cyanophyceae</taxon>
        <taxon>Synechococcales</taxon>
        <taxon>Synechococcaceae</taxon>
        <taxon>Synechococcus</taxon>
    </lineage>
</organism>
<gene>
    <name evidence="4" type="primary">nrtC</name>
    <name type="ordered locus">Synpcc7942_1237</name>
</gene>
<name>NRTC_SYNE7</name>
<reference key="1">
    <citation type="journal article" date="1993" name="Mol. Gen. Genet.">
        <title>Identification and characterization of a gene cluster involved in nitrate transport in the cyanobacterium Synechococcus sp. PCC7942.</title>
        <authorList>
            <person name="Omata T."/>
            <person name="Andriesse X."/>
            <person name="Hirano A."/>
        </authorList>
    </citation>
    <scope>NUCLEOTIDE SEQUENCE [GENOMIC DNA]</scope>
    <scope>FUNCTION</scope>
    <scope>DOMAIN</scope>
    <scope>DISRUPTION PHENOTYPE</scope>
</reference>
<reference key="2">
    <citation type="submission" date="2005-08" db="EMBL/GenBank/DDBJ databases">
        <title>Complete sequence of chromosome 1 of Synechococcus elongatus PCC 7942.</title>
        <authorList>
            <consortium name="US DOE Joint Genome Institute"/>
            <person name="Copeland A."/>
            <person name="Lucas S."/>
            <person name="Lapidus A."/>
            <person name="Barry K."/>
            <person name="Detter J.C."/>
            <person name="Glavina T."/>
            <person name="Hammon N."/>
            <person name="Israni S."/>
            <person name="Pitluck S."/>
            <person name="Schmutz J."/>
            <person name="Larimer F."/>
            <person name="Land M."/>
            <person name="Kyrpides N."/>
            <person name="Lykidis A."/>
            <person name="Golden S."/>
            <person name="Richardson P."/>
        </authorList>
    </citation>
    <scope>NUCLEOTIDE SEQUENCE [LARGE SCALE GENOMIC DNA]</scope>
    <source>
        <strain>ATCC 33912 / PCC 7942 / FACHB-805</strain>
    </source>
</reference>
<reference key="3">
    <citation type="journal article" date="1995" name="Plant Cell Physiol.">
        <title>Structure, function and regulation of the nitrate transport system of the cyanobacterium Synechococcus sp. PCC7942.</title>
        <authorList>
            <person name="Omata T."/>
        </authorList>
    </citation>
    <scope>FUNCTION</scope>
    <scope>CATALYTIC ACTIVITY</scope>
    <scope>SUBUNIT</scope>
    <scope>SUBCELLULAR LOCATION</scope>
    <source>
        <strain>ATCC 33912 / PCC 7942 / FACHB-805</strain>
    </source>
</reference>
<reference key="4">
    <citation type="journal article" date="1997" name="J. Biol. Chem.">
        <title>Involvement of the C-terminal domain of an ATP-binding subunit in the regulation of the ABC-type nitrate/nitrite transporter of the Cyanobacterium synechococcus sp. strain PCC 7942.</title>
        <authorList>
            <person name="Kobayashi M."/>
            <person name="Rodriguez R."/>
            <person name="Lara C."/>
            <person name="Omata T."/>
        </authorList>
    </citation>
    <scope>ACTIVITY REGULATION</scope>
    <scope>DOMAIN</scope>
</reference>
<keyword id="KW-0067">ATP-binding</keyword>
<keyword id="KW-0997">Cell inner membrane</keyword>
<keyword id="KW-1003">Cell membrane</keyword>
<keyword id="KW-0406">Ion transport</keyword>
<keyword id="KW-0472">Membrane</keyword>
<keyword id="KW-0534">Nitrate assimilation</keyword>
<keyword id="KW-0547">Nucleotide-binding</keyword>
<keyword id="KW-1185">Reference proteome</keyword>
<keyword id="KW-1278">Translocase</keyword>
<keyword id="KW-0813">Transport</keyword>
<accession>P38045</accession>
<accession>Q31NV2</accession>